<evidence type="ECO:0000255" key="1">
    <source>
        <dbReference type="HAMAP-Rule" id="MF_01328"/>
    </source>
</evidence>
<evidence type="ECO:0000256" key="2">
    <source>
        <dbReference type="SAM" id="MobiDB-lite"/>
    </source>
</evidence>
<evidence type="ECO:0000305" key="3"/>
<comment type="function">
    <text evidence="1">One of the primary rRNA binding proteins, this protein initially binds near the 5'-end of the 23S rRNA. It is important during the early stages of 50S assembly. It makes multiple contacts with different domains of the 23S rRNA in the assembled 50S subunit and ribosome.</text>
</comment>
<comment type="function">
    <text evidence="1">Forms part of the polypeptide exit tunnel.</text>
</comment>
<comment type="subunit">
    <text evidence="1">Part of the 50S ribosomal subunit.</text>
</comment>
<comment type="similarity">
    <text evidence="1">Belongs to the universal ribosomal protein uL4 family.</text>
</comment>
<name>RL4_ACAM1</name>
<accession>B0C1D4</accession>
<reference key="1">
    <citation type="journal article" date="2008" name="Proc. Natl. Acad. Sci. U.S.A.">
        <title>Niche adaptation and genome expansion in the chlorophyll d-producing cyanobacterium Acaryochloris marina.</title>
        <authorList>
            <person name="Swingley W.D."/>
            <person name="Chen M."/>
            <person name="Cheung P.C."/>
            <person name="Conrad A.L."/>
            <person name="Dejesa L.C."/>
            <person name="Hao J."/>
            <person name="Honchak B.M."/>
            <person name="Karbach L.E."/>
            <person name="Kurdoglu A."/>
            <person name="Lahiri S."/>
            <person name="Mastrian S.D."/>
            <person name="Miyashita H."/>
            <person name="Page L."/>
            <person name="Ramakrishna P."/>
            <person name="Satoh S."/>
            <person name="Sattley W.M."/>
            <person name="Shimada Y."/>
            <person name="Taylor H.L."/>
            <person name="Tomo T."/>
            <person name="Tsuchiya T."/>
            <person name="Wang Z.T."/>
            <person name="Raymond J."/>
            <person name="Mimuro M."/>
            <person name="Blankenship R.E."/>
            <person name="Touchman J.W."/>
        </authorList>
    </citation>
    <scope>NUCLEOTIDE SEQUENCE [LARGE SCALE GENOMIC DNA]</scope>
    <source>
        <strain>MBIC 11017</strain>
    </source>
</reference>
<dbReference type="EMBL" id="CP000828">
    <property type="protein sequence ID" value="ABW29669.1"/>
    <property type="molecule type" value="Genomic_DNA"/>
</dbReference>
<dbReference type="RefSeq" id="WP_010469327.1">
    <property type="nucleotide sequence ID" value="NC_009925.1"/>
</dbReference>
<dbReference type="SMR" id="B0C1D4"/>
<dbReference type="STRING" id="329726.AM1_4697"/>
<dbReference type="KEGG" id="amr:AM1_4697"/>
<dbReference type="eggNOG" id="COG0088">
    <property type="taxonomic scope" value="Bacteria"/>
</dbReference>
<dbReference type="HOGENOM" id="CLU_041575_5_2_3"/>
<dbReference type="OrthoDB" id="9803201at2"/>
<dbReference type="Proteomes" id="UP000000268">
    <property type="component" value="Chromosome"/>
</dbReference>
<dbReference type="GO" id="GO:1990904">
    <property type="term" value="C:ribonucleoprotein complex"/>
    <property type="evidence" value="ECO:0007669"/>
    <property type="project" value="UniProtKB-KW"/>
</dbReference>
<dbReference type="GO" id="GO:0005840">
    <property type="term" value="C:ribosome"/>
    <property type="evidence" value="ECO:0007669"/>
    <property type="project" value="UniProtKB-KW"/>
</dbReference>
<dbReference type="GO" id="GO:0019843">
    <property type="term" value="F:rRNA binding"/>
    <property type="evidence" value="ECO:0007669"/>
    <property type="project" value="UniProtKB-UniRule"/>
</dbReference>
<dbReference type="GO" id="GO:0003735">
    <property type="term" value="F:structural constituent of ribosome"/>
    <property type="evidence" value="ECO:0007669"/>
    <property type="project" value="InterPro"/>
</dbReference>
<dbReference type="GO" id="GO:0006412">
    <property type="term" value="P:translation"/>
    <property type="evidence" value="ECO:0007669"/>
    <property type="project" value="UniProtKB-UniRule"/>
</dbReference>
<dbReference type="Gene3D" id="3.40.1370.10">
    <property type="match status" value="1"/>
</dbReference>
<dbReference type="HAMAP" id="MF_01328_B">
    <property type="entry name" value="Ribosomal_uL4_B"/>
    <property type="match status" value="1"/>
</dbReference>
<dbReference type="InterPro" id="IPR002136">
    <property type="entry name" value="Ribosomal_uL4"/>
</dbReference>
<dbReference type="InterPro" id="IPR013005">
    <property type="entry name" value="Ribosomal_uL4-like"/>
</dbReference>
<dbReference type="InterPro" id="IPR023574">
    <property type="entry name" value="Ribosomal_uL4_dom_sf"/>
</dbReference>
<dbReference type="NCBIfam" id="TIGR03953">
    <property type="entry name" value="rplD_bact"/>
    <property type="match status" value="1"/>
</dbReference>
<dbReference type="PANTHER" id="PTHR10746">
    <property type="entry name" value="50S RIBOSOMAL PROTEIN L4"/>
    <property type="match status" value="1"/>
</dbReference>
<dbReference type="PANTHER" id="PTHR10746:SF17">
    <property type="entry name" value="LARGE RIBOSOMAL SUBUNIT PROTEIN UL4C"/>
    <property type="match status" value="1"/>
</dbReference>
<dbReference type="Pfam" id="PF00573">
    <property type="entry name" value="Ribosomal_L4"/>
    <property type="match status" value="1"/>
</dbReference>
<dbReference type="SUPFAM" id="SSF52166">
    <property type="entry name" value="Ribosomal protein L4"/>
    <property type="match status" value="1"/>
</dbReference>
<proteinExistence type="inferred from homology"/>
<feature type="chain" id="PRO_1000086504" description="Large ribosomal subunit protein uL4">
    <location>
        <begin position="1"/>
        <end position="210"/>
    </location>
</feature>
<feature type="region of interest" description="Disordered" evidence="2">
    <location>
        <begin position="41"/>
        <end position="80"/>
    </location>
</feature>
<feature type="compositionally biased region" description="Polar residues" evidence="2">
    <location>
        <begin position="41"/>
        <end position="52"/>
    </location>
</feature>
<feature type="compositionally biased region" description="Basic residues" evidence="2">
    <location>
        <begin position="60"/>
        <end position="71"/>
    </location>
</feature>
<keyword id="KW-1185">Reference proteome</keyword>
<keyword id="KW-0687">Ribonucleoprotein</keyword>
<keyword id="KW-0689">Ribosomal protein</keyword>
<keyword id="KW-0694">RNA-binding</keyword>
<keyword id="KW-0699">rRNA-binding</keyword>
<protein>
    <recommendedName>
        <fullName evidence="1">Large ribosomal subunit protein uL4</fullName>
    </recommendedName>
    <alternativeName>
        <fullName evidence="3">50S ribosomal protein L4</fullName>
    </alternativeName>
</protein>
<organism>
    <name type="scientific">Acaryochloris marina (strain MBIC 11017)</name>
    <dbReference type="NCBI Taxonomy" id="329726"/>
    <lineage>
        <taxon>Bacteria</taxon>
        <taxon>Bacillati</taxon>
        <taxon>Cyanobacteriota</taxon>
        <taxon>Cyanophyceae</taxon>
        <taxon>Acaryochloridales</taxon>
        <taxon>Acaryochloridaceae</taxon>
        <taxon>Acaryochloris</taxon>
    </lineage>
</organism>
<gene>
    <name evidence="1" type="primary">rplD</name>
    <name evidence="1" type="synonym">rpl4</name>
    <name type="ordered locus">AM1_4697</name>
</gene>
<sequence>MVNCVVRNWQGEDAGQAELDLKVANEENAAHIVHRALRRQMNNARQGTASSKTRSEVRGGGRKPWRQKGTGRARAGSSRSPLWRGGGVIFGPKPRSYSTKMNRKERRLALRTAFASRAEDLVVVEDFGDNLSRPKTKDLLEAMGRWGVNADSKTLLILADKHDTIYLSARNVEKLKLILASNLNVYDLLAADQIVATQSAIAKIQEVYSD</sequence>